<organism>
    <name type="scientific">Pseudomonas syringae pv. tomato (strain ATCC BAA-871 / DC3000)</name>
    <dbReference type="NCBI Taxonomy" id="223283"/>
    <lineage>
        <taxon>Bacteria</taxon>
        <taxon>Pseudomonadati</taxon>
        <taxon>Pseudomonadota</taxon>
        <taxon>Gammaproteobacteria</taxon>
        <taxon>Pseudomonadales</taxon>
        <taxon>Pseudomonadaceae</taxon>
        <taxon>Pseudomonas</taxon>
    </lineage>
</organism>
<accession>Q889Q3</accession>
<feature type="chain" id="PRO_0000151770" description="GTP cyclohydrolase-2">
    <location>
        <begin position="1"/>
        <end position="205"/>
    </location>
</feature>
<feature type="active site" description="Proton acceptor" evidence="1">
    <location>
        <position position="126"/>
    </location>
</feature>
<feature type="active site" description="Nucleophile" evidence="1">
    <location>
        <position position="128"/>
    </location>
</feature>
<feature type="binding site" evidence="1">
    <location>
        <begin position="49"/>
        <end position="53"/>
    </location>
    <ligand>
        <name>GTP</name>
        <dbReference type="ChEBI" id="CHEBI:37565"/>
    </ligand>
</feature>
<feature type="binding site" evidence="1">
    <location>
        <position position="54"/>
    </location>
    <ligand>
        <name>Zn(2+)</name>
        <dbReference type="ChEBI" id="CHEBI:29105"/>
        <note>catalytic</note>
    </ligand>
</feature>
<feature type="binding site" evidence="1">
    <location>
        <position position="65"/>
    </location>
    <ligand>
        <name>Zn(2+)</name>
        <dbReference type="ChEBI" id="CHEBI:29105"/>
        <note>catalytic</note>
    </ligand>
</feature>
<feature type="binding site" evidence="1">
    <location>
        <position position="67"/>
    </location>
    <ligand>
        <name>Zn(2+)</name>
        <dbReference type="ChEBI" id="CHEBI:29105"/>
        <note>catalytic</note>
    </ligand>
</feature>
<feature type="binding site" evidence="1">
    <location>
        <position position="70"/>
    </location>
    <ligand>
        <name>GTP</name>
        <dbReference type="ChEBI" id="CHEBI:37565"/>
    </ligand>
</feature>
<feature type="binding site" evidence="1">
    <location>
        <begin position="92"/>
        <end position="94"/>
    </location>
    <ligand>
        <name>GTP</name>
        <dbReference type="ChEBI" id="CHEBI:37565"/>
    </ligand>
</feature>
<feature type="binding site" evidence="1">
    <location>
        <position position="114"/>
    </location>
    <ligand>
        <name>GTP</name>
        <dbReference type="ChEBI" id="CHEBI:37565"/>
    </ligand>
</feature>
<feature type="binding site" evidence="1">
    <location>
        <position position="149"/>
    </location>
    <ligand>
        <name>GTP</name>
        <dbReference type="ChEBI" id="CHEBI:37565"/>
    </ligand>
</feature>
<feature type="binding site" evidence="1">
    <location>
        <position position="154"/>
    </location>
    <ligand>
        <name>GTP</name>
        <dbReference type="ChEBI" id="CHEBI:37565"/>
    </ligand>
</feature>
<comment type="function">
    <text evidence="1">Catalyzes the conversion of GTP to 2,5-diamino-6-ribosylamino-4(3H)-pyrimidinone 5'-phosphate (DARP), formate and pyrophosphate.</text>
</comment>
<comment type="catalytic activity">
    <reaction evidence="1">
        <text>GTP + 4 H2O = 2,5-diamino-6-hydroxy-4-(5-phosphoribosylamino)-pyrimidine + formate + 2 phosphate + 3 H(+)</text>
        <dbReference type="Rhea" id="RHEA:23704"/>
        <dbReference type="ChEBI" id="CHEBI:15377"/>
        <dbReference type="ChEBI" id="CHEBI:15378"/>
        <dbReference type="ChEBI" id="CHEBI:15740"/>
        <dbReference type="ChEBI" id="CHEBI:37565"/>
        <dbReference type="ChEBI" id="CHEBI:43474"/>
        <dbReference type="ChEBI" id="CHEBI:58614"/>
        <dbReference type="EC" id="3.5.4.25"/>
    </reaction>
</comment>
<comment type="cofactor">
    <cofactor evidence="1">
        <name>Zn(2+)</name>
        <dbReference type="ChEBI" id="CHEBI:29105"/>
    </cofactor>
    <text evidence="1">Binds 1 zinc ion per subunit.</text>
</comment>
<comment type="pathway">
    <text evidence="1">Cofactor biosynthesis; riboflavin biosynthesis; 5-amino-6-(D-ribitylamino)uracil from GTP: step 1/4.</text>
</comment>
<comment type="similarity">
    <text evidence="1">Belongs to the GTP cyclohydrolase II family.</text>
</comment>
<comment type="sequence caution" evidence="2">
    <conflict type="erroneous initiation">
        <sequence resource="EMBL-CDS" id="AAO54238"/>
    </conflict>
</comment>
<dbReference type="EC" id="3.5.4.25" evidence="1"/>
<dbReference type="EMBL" id="AE016853">
    <property type="protein sequence ID" value="AAO54238.1"/>
    <property type="status" value="ALT_INIT"/>
    <property type="molecule type" value="Genomic_DNA"/>
</dbReference>
<dbReference type="RefSeq" id="NP_790543.1">
    <property type="nucleotide sequence ID" value="NC_004578.1"/>
</dbReference>
<dbReference type="RefSeq" id="WP_003379129.1">
    <property type="nucleotide sequence ID" value="NC_004578.1"/>
</dbReference>
<dbReference type="SMR" id="Q889Q3"/>
<dbReference type="STRING" id="223283.PSPTO_0696"/>
<dbReference type="GeneID" id="1182316"/>
<dbReference type="KEGG" id="pst:PSPTO_0696"/>
<dbReference type="PATRIC" id="fig|223283.9.peg.704"/>
<dbReference type="eggNOG" id="COG0807">
    <property type="taxonomic scope" value="Bacteria"/>
</dbReference>
<dbReference type="HOGENOM" id="CLU_020273_2_1_6"/>
<dbReference type="OrthoDB" id="9793111at2"/>
<dbReference type="UniPathway" id="UPA00275">
    <property type="reaction ID" value="UER00400"/>
</dbReference>
<dbReference type="Proteomes" id="UP000002515">
    <property type="component" value="Chromosome"/>
</dbReference>
<dbReference type="GO" id="GO:0005829">
    <property type="term" value="C:cytosol"/>
    <property type="evidence" value="ECO:0007669"/>
    <property type="project" value="TreeGrafter"/>
</dbReference>
<dbReference type="GO" id="GO:0005525">
    <property type="term" value="F:GTP binding"/>
    <property type="evidence" value="ECO:0007669"/>
    <property type="project" value="UniProtKB-KW"/>
</dbReference>
<dbReference type="GO" id="GO:0003935">
    <property type="term" value="F:GTP cyclohydrolase II activity"/>
    <property type="evidence" value="ECO:0007669"/>
    <property type="project" value="UniProtKB-UniRule"/>
</dbReference>
<dbReference type="GO" id="GO:0008270">
    <property type="term" value="F:zinc ion binding"/>
    <property type="evidence" value="ECO:0007669"/>
    <property type="project" value="UniProtKB-UniRule"/>
</dbReference>
<dbReference type="GO" id="GO:0009231">
    <property type="term" value="P:riboflavin biosynthetic process"/>
    <property type="evidence" value="ECO:0007669"/>
    <property type="project" value="UniProtKB-UniRule"/>
</dbReference>
<dbReference type="CDD" id="cd00641">
    <property type="entry name" value="GTP_cyclohydro2"/>
    <property type="match status" value="1"/>
</dbReference>
<dbReference type="FunFam" id="3.40.50.10990:FF:000002">
    <property type="entry name" value="GTP cyclohydrolase-2"/>
    <property type="match status" value="1"/>
</dbReference>
<dbReference type="Gene3D" id="3.40.50.10990">
    <property type="entry name" value="GTP cyclohydrolase II"/>
    <property type="match status" value="1"/>
</dbReference>
<dbReference type="HAMAP" id="MF_00179">
    <property type="entry name" value="RibA"/>
    <property type="match status" value="1"/>
</dbReference>
<dbReference type="InterPro" id="IPR032677">
    <property type="entry name" value="GTP_cyclohydro_II"/>
</dbReference>
<dbReference type="InterPro" id="IPR000926">
    <property type="entry name" value="RibA"/>
</dbReference>
<dbReference type="InterPro" id="IPR036144">
    <property type="entry name" value="RibA-like_sf"/>
</dbReference>
<dbReference type="NCBIfam" id="NF001591">
    <property type="entry name" value="PRK00393.1"/>
    <property type="match status" value="1"/>
</dbReference>
<dbReference type="NCBIfam" id="TIGR00505">
    <property type="entry name" value="ribA"/>
    <property type="match status" value="1"/>
</dbReference>
<dbReference type="PANTHER" id="PTHR21327:SF18">
    <property type="entry name" value="3,4-DIHYDROXY-2-BUTANONE 4-PHOSPHATE SYNTHASE"/>
    <property type="match status" value="1"/>
</dbReference>
<dbReference type="PANTHER" id="PTHR21327">
    <property type="entry name" value="GTP CYCLOHYDROLASE II-RELATED"/>
    <property type="match status" value="1"/>
</dbReference>
<dbReference type="Pfam" id="PF00925">
    <property type="entry name" value="GTP_cyclohydro2"/>
    <property type="match status" value="1"/>
</dbReference>
<dbReference type="SUPFAM" id="SSF142695">
    <property type="entry name" value="RibA-like"/>
    <property type="match status" value="1"/>
</dbReference>
<sequence length="205" mass="22119">MPVVFVAASKLPTPFAEFAMHGFIESATGREHVVLSLGDVADGAPVLGRVHSECLTGDALFSQRCDCGSQLEAAMRAIATEGRGVLLYLRQEGRGIGLMNKIRAYELQDGGADTVEANERLGFAADQRDYAICLPMLQHLGVQSLRLMTNNPRKVKALTDMGINVAERVPLHTGQNPHNRLYLATKAGKLGHMMGNEHQSEVGPA</sequence>
<gene>
    <name evidence="1" type="primary">ribA</name>
    <name type="ordered locus">PSPTO_0696</name>
</gene>
<proteinExistence type="inferred from homology"/>
<evidence type="ECO:0000255" key="1">
    <source>
        <dbReference type="HAMAP-Rule" id="MF_00179"/>
    </source>
</evidence>
<evidence type="ECO:0000305" key="2"/>
<keyword id="KW-0342">GTP-binding</keyword>
<keyword id="KW-0378">Hydrolase</keyword>
<keyword id="KW-0479">Metal-binding</keyword>
<keyword id="KW-0547">Nucleotide-binding</keyword>
<keyword id="KW-1185">Reference proteome</keyword>
<keyword id="KW-0686">Riboflavin biosynthesis</keyword>
<keyword id="KW-0862">Zinc</keyword>
<protein>
    <recommendedName>
        <fullName evidence="1">GTP cyclohydrolase-2</fullName>
        <ecNumber evidence="1">3.5.4.25</ecNumber>
    </recommendedName>
    <alternativeName>
        <fullName evidence="1">GTP cyclohydrolase II</fullName>
    </alternativeName>
</protein>
<name>RIBA_PSESM</name>
<reference key="1">
    <citation type="journal article" date="2003" name="Proc. Natl. Acad. Sci. U.S.A.">
        <title>The complete genome sequence of the Arabidopsis and tomato pathogen Pseudomonas syringae pv. tomato DC3000.</title>
        <authorList>
            <person name="Buell C.R."/>
            <person name="Joardar V."/>
            <person name="Lindeberg M."/>
            <person name="Selengut J."/>
            <person name="Paulsen I.T."/>
            <person name="Gwinn M.L."/>
            <person name="Dodson R.J."/>
            <person name="DeBoy R.T."/>
            <person name="Durkin A.S."/>
            <person name="Kolonay J.F."/>
            <person name="Madupu R."/>
            <person name="Daugherty S.C."/>
            <person name="Brinkac L.M."/>
            <person name="Beanan M.J."/>
            <person name="Haft D.H."/>
            <person name="Nelson W.C."/>
            <person name="Davidsen T.M."/>
            <person name="Zafar N."/>
            <person name="Zhou L."/>
            <person name="Liu J."/>
            <person name="Yuan Q."/>
            <person name="Khouri H.M."/>
            <person name="Fedorova N.B."/>
            <person name="Tran B."/>
            <person name="Russell D."/>
            <person name="Berry K.J."/>
            <person name="Utterback T.R."/>
            <person name="Van Aken S.E."/>
            <person name="Feldblyum T.V."/>
            <person name="D'Ascenzo M."/>
            <person name="Deng W.-L."/>
            <person name="Ramos A.R."/>
            <person name="Alfano J.R."/>
            <person name="Cartinhour S."/>
            <person name="Chatterjee A.K."/>
            <person name="Delaney T.P."/>
            <person name="Lazarowitz S.G."/>
            <person name="Martin G.B."/>
            <person name="Schneider D.J."/>
            <person name="Tang X."/>
            <person name="Bender C.L."/>
            <person name="White O."/>
            <person name="Fraser C.M."/>
            <person name="Collmer A."/>
        </authorList>
    </citation>
    <scope>NUCLEOTIDE SEQUENCE [LARGE SCALE GENOMIC DNA]</scope>
    <source>
        <strain>ATCC BAA-871 / DC3000</strain>
    </source>
</reference>